<protein>
    <recommendedName>
        <fullName evidence="1">DNA replication and repair protein RecF</fullName>
    </recommendedName>
</protein>
<dbReference type="EMBL" id="CP000857">
    <property type="protein sequence ID" value="ACN47993.1"/>
    <property type="molecule type" value="Genomic_DNA"/>
</dbReference>
<dbReference type="RefSeq" id="WP_000060081.1">
    <property type="nucleotide sequence ID" value="NC_012125.1"/>
</dbReference>
<dbReference type="SMR" id="C0Q2K7"/>
<dbReference type="KEGG" id="sei:SPC_3923"/>
<dbReference type="HOGENOM" id="CLU_040267_0_0_6"/>
<dbReference type="Proteomes" id="UP000001599">
    <property type="component" value="Chromosome"/>
</dbReference>
<dbReference type="GO" id="GO:0005737">
    <property type="term" value="C:cytoplasm"/>
    <property type="evidence" value="ECO:0007669"/>
    <property type="project" value="UniProtKB-SubCell"/>
</dbReference>
<dbReference type="GO" id="GO:0005524">
    <property type="term" value="F:ATP binding"/>
    <property type="evidence" value="ECO:0007669"/>
    <property type="project" value="UniProtKB-UniRule"/>
</dbReference>
<dbReference type="GO" id="GO:0003697">
    <property type="term" value="F:single-stranded DNA binding"/>
    <property type="evidence" value="ECO:0007669"/>
    <property type="project" value="UniProtKB-UniRule"/>
</dbReference>
<dbReference type="GO" id="GO:0006260">
    <property type="term" value="P:DNA replication"/>
    <property type="evidence" value="ECO:0007669"/>
    <property type="project" value="UniProtKB-UniRule"/>
</dbReference>
<dbReference type="GO" id="GO:0000731">
    <property type="term" value="P:DNA synthesis involved in DNA repair"/>
    <property type="evidence" value="ECO:0007669"/>
    <property type="project" value="TreeGrafter"/>
</dbReference>
<dbReference type="GO" id="GO:0006302">
    <property type="term" value="P:double-strand break repair"/>
    <property type="evidence" value="ECO:0007669"/>
    <property type="project" value="TreeGrafter"/>
</dbReference>
<dbReference type="GO" id="GO:0009432">
    <property type="term" value="P:SOS response"/>
    <property type="evidence" value="ECO:0007669"/>
    <property type="project" value="UniProtKB-UniRule"/>
</dbReference>
<dbReference type="FunFam" id="1.20.1050.90:FF:000001">
    <property type="entry name" value="DNA replication and repair protein RecF"/>
    <property type="match status" value="1"/>
</dbReference>
<dbReference type="Gene3D" id="3.40.50.300">
    <property type="entry name" value="P-loop containing nucleotide triphosphate hydrolases"/>
    <property type="match status" value="1"/>
</dbReference>
<dbReference type="Gene3D" id="1.20.1050.90">
    <property type="entry name" value="RecF/RecN/SMC, N-terminal domain"/>
    <property type="match status" value="1"/>
</dbReference>
<dbReference type="HAMAP" id="MF_00365">
    <property type="entry name" value="RecF"/>
    <property type="match status" value="1"/>
</dbReference>
<dbReference type="InterPro" id="IPR001238">
    <property type="entry name" value="DNA-binding_RecF"/>
</dbReference>
<dbReference type="InterPro" id="IPR018078">
    <property type="entry name" value="DNA-binding_RecF_CS"/>
</dbReference>
<dbReference type="InterPro" id="IPR027417">
    <property type="entry name" value="P-loop_NTPase"/>
</dbReference>
<dbReference type="InterPro" id="IPR003395">
    <property type="entry name" value="RecF/RecN/SMC_N"/>
</dbReference>
<dbReference type="InterPro" id="IPR042174">
    <property type="entry name" value="RecF_2"/>
</dbReference>
<dbReference type="NCBIfam" id="TIGR00611">
    <property type="entry name" value="recf"/>
    <property type="match status" value="1"/>
</dbReference>
<dbReference type="PANTHER" id="PTHR32182">
    <property type="entry name" value="DNA REPLICATION AND REPAIR PROTEIN RECF"/>
    <property type="match status" value="1"/>
</dbReference>
<dbReference type="PANTHER" id="PTHR32182:SF0">
    <property type="entry name" value="DNA REPLICATION AND REPAIR PROTEIN RECF"/>
    <property type="match status" value="1"/>
</dbReference>
<dbReference type="Pfam" id="PF02463">
    <property type="entry name" value="SMC_N"/>
    <property type="match status" value="1"/>
</dbReference>
<dbReference type="SUPFAM" id="SSF52540">
    <property type="entry name" value="P-loop containing nucleoside triphosphate hydrolases"/>
    <property type="match status" value="1"/>
</dbReference>
<dbReference type="PROSITE" id="PS00617">
    <property type="entry name" value="RECF_1"/>
    <property type="match status" value="1"/>
</dbReference>
<dbReference type="PROSITE" id="PS00618">
    <property type="entry name" value="RECF_2"/>
    <property type="match status" value="1"/>
</dbReference>
<evidence type="ECO:0000255" key="1">
    <source>
        <dbReference type="HAMAP-Rule" id="MF_00365"/>
    </source>
</evidence>
<comment type="function">
    <text evidence="1">The RecF protein is involved in DNA metabolism; it is required for DNA replication and normal SOS inducibility. RecF binds preferentially to single-stranded, linear DNA. It also seems to bind ATP.</text>
</comment>
<comment type="subcellular location">
    <subcellularLocation>
        <location evidence="1">Cytoplasm</location>
    </subcellularLocation>
</comment>
<comment type="similarity">
    <text evidence="1">Belongs to the RecF family.</text>
</comment>
<name>RECF_SALPC</name>
<keyword id="KW-0067">ATP-binding</keyword>
<keyword id="KW-0963">Cytoplasm</keyword>
<keyword id="KW-0227">DNA damage</keyword>
<keyword id="KW-0234">DNA repair</keyword>
<keyword id="KW-0235">DNA replication</keyword>
<keyword id="KW-0238">DNA-binding</keyword>
<keyword id="KW-0547">Nucleotide-binding</keyword>
<keyword id="KW-0742">SOS response</keyword>
<accession>C0Q2K7</accession>
<sequence length="357" mass="40484">MSLTRLLIKDFRNIENADLALSPGFNFLVGANGSGKTSVLEAIYTLGHGRAFRSLQPGRVIRHEQEAFVLHGRLQGEERETSIGLTKDKQGDSKVRIDGTDGHKIAELAHLMPMQLITPEGFTLLNGGPKYRRAFLDWGCFHNEAGFFTAWSNLKRLLKQRNAALRQVSRYEQLRPWDKELIPLAEQISTWRAEYSSAIAQDMADTCQQFLPEFSLTFSFQRGWEKETDYADVLERSFERDRMLTYTAHGPHKADFRIRADGAPVEDTLSRGQLKLLMCALRLAQGEFLTRESGRRCLYLIDDFASELDDARRGLLASRLKATQSQVFVSAISAEHVIDMSDENSKMFTVEKGKITD</sequence>
<reference key="1">
    <citation type="journal article" date="2009" name="PLoS ONE">
        <title>Salmonella paratyphi C: genetic divergence from Salmonella choleraesuis and pathogenic convergence with Salmonella typhi.</title>
        <authorList>
            <person name="Liu W.-Q."/>
            <person name="Feng Y."/>
            <person name="Wang Y."/>
            <person name="Zou Q.-H."/>
            <person name="Chen F."/>
            <person name="Guo J.-T."/>
            <person name="Peng Y.-H."/>
            <person name="Jin Y."/>
            <person name="Li Y.-G."/>
            <person name="Hu S.-N."/>
            <person name="Johnston R.N."/>
            <person name="Liu G.-R."/>
            <person name="Liu S.-L."/>
        </authorList>
    </citation>
    <scope>NUCLEOTIDE SEQUENCE [LARGE SCALE GENOMIC DNA]</scope>
    <source>
        <strain>RKS4594</strain>
    </source>
</reference>
<proteinExistence type="inferred from homology"/>
<feature type="chain" id="PRO_1000133697" description="DNA replication and repair protein RecF">
    <location>
        <begin position="1"/>
        <end position="357"/>
    </location>
</feature>
<feature type="binding site" evidence="1">
    <location>
        <begin position="30"/>
        <end position="37"/>
    </location>
    <ligand>
        <name>ATP</name>
        <dbReference type="ChEBI" id="CHEBI:30616"/>
    </ligand>
</feature>
<gene>
    <name evidence="1" type="primary">recF</name>
    <name type="ordered locus">SPC_3923</name>
</gene>
<organism>
    <name type="scientific">Salmonella paratyphi C (strain RKS4594)</name>
    <dbReference type="NCBI Taxonomy" id="476213"/>
    <lineage>
        <taxon>Bacteria</taxon>
        <taxon>Pseudomonadati</taxon>
        <taxon>Pseudomonadota</taxon>
        <taxon>Gammaproteobacteria</taxon>
        <taxon>Enterobacterales</taxon>
        <taxon>Enterobacteriaceae</taxon>
        <taxon>Salmonella</taxon>
    </lineage>
</organism>